<evidence type="ECO:0000255" key="1">
    <source>
        <dbReference type="HAMAP-Rule" id="MF_00339"/>
    </source>
</evidence>
<organism>
    <name type="scientific">Escherichia coli O8 (strain IAI1)</name>
    <dbReference type="NCBI Taxonomy" id="585034"/>
    <lineage>
        <taxon>Bacteria</taxon>
        <taxon>Pseudomonadati</taxon>
        <taxon>Pseudomonadota</taxon>
        <taxon>Gammaproteobacteria</taxon>
        <taxon>Enterobacterales</taxon>
        <taxon>Enterobacteriaceae</taxon>
        <taxon>Escherichia</taxon>
    </lineage>
</organism>
<accession>B7M6W7</accession>
<keyword id="KW-0021">Allosteric enzyme</keyword>
<keyword id="KW-0067">ATP-binding</keyword>
<keyword id="KW-0963">Cytoplasm</keyword>
<keyword id="KW-0324">Glycolysis</keyword>
<keyword id="KW-0418">Kinase</keyword>
<keyword id="KW-0460">Magnesium</keyword>
<keyword id="KW-0479">Metal-binding</keyword>
<keyword id="KW-0547">Nucleotide-binding</keyword>
<keyword id="KW-0808">Transferase</keyword>
<name>PFKA_ECO8A</name>
<proteinExistence type="inferred from homology"/>
<sequence>MIKKIGVLTSGGDAPGMNAAIRGVVRSALTEGLEVMGIYDGYLGLYEDRMVQLDRYSVSDMINRGGTFLGSARFPEFRDENIRAVAIENLKKRGIDALVVIGGDGSYMGAMRLTEMGFPCIGLPGTIDNDIKGTDYTIGFFTALSTVVEAIDRLRDTSSSHQRISVVEVMGRYCGDLTLAAAIAGGCEFVVVPEVEFSREDLVNEIKAGIAKGKKHAIVAITEHMCDVDELAHFIEKETGRETRATVLGHIQRGGSPVPYDRILASRMGAYAIDLLLAGYGGRCVGIQNEQLVHHDIIDAIENMKRPFKGDWLDCAKKLY</sequence>
<protein>
    <recommendedName>
        <fullName evidence="1">ATP-dependent 6-phosphofructokinase isozyme 1</fullName>
        <shortName evidence="1">ATP-PFK 1</shortName>
        <shortName evidence="1">Phosphofructokinase 1</shortName>
        <ecNumber evidence="1">2.7.1.11</ecNumber>
    </recommendedName>
    <alternativeName>
        <fullName>6-phosphofructokinase isozyme I</fullName>
    </alternativeName>
    <alternativeName>
        <fullName evidence="1">Phosphohexokinase 1</fullName>
    </alternativeName>
</protein>
<dbReference type="EC" id="2.7.1.11" evidence="1"/>
<dbReference type="EMBL" id="CU928160">
    <property type="protein sequence ID" value="CAR00892.1"/>
    <property type="molecule type" value="Genomic_DNA"/>
</dbReference>
<dbReference type="RefSeq" id="WP_000591795.1">
    <property type="nucleotide sequence ID" value="NC_011741.1"/>
</dbReference>
<dbReference type="SMR" id="B7M6W7"/>
<dbReference type="GeneID" id="93777982"/>
<dbReference type="KEGG" id="ecr:ECIAI1_4121"/>
<dbReference type="HOGENOM" id="CLU_020655_0_1_6"/>
<dbReference type="UniPathway" id="UPA00109">
    <property type="reaction ID" value="UER00182"/>
</dbReference>
<dbReference type="GO" id="GO:0005945">
    <property type="term" value="C:6-phosphofructokinase complex"/>
    <property type="evidence" value="ECO:0007669"/>
    <property type="project" value="TreeGrafter"/>
</dbReference>
<dbReference type="GO" id="GO:0003872">
    <property type="term" value="F:6-phosphofructokinase activity"/>
    <property type="evidence" value="ECO:0007669"/>
    <property type="project" value="UniProtKB-UniRule"/>
</dbReference>
<dbReference type="GO" id="GO:0016208">
    <property type="term" value="F:AMP binding"/>
    <property type="evidence" value="ECO:0007669"/>
    <property type="project" value="TreeGrafter"/>
</dbReference>
<dbReference type="GO" id="GO:0005524">
    <property type="term" value="F:ATP binding"/>
    <property type="evidence" value="ECO:0007669"/>
    <property type="project" value="UniProtKB-KW"/>
</dbReference>
<dbReference type="GO" id="GO:0070095">
    <property type="term" value="F:fructose-6-phosphate binding"/>
    <property type="evidence" value="ECO:0007669"/>
    <property type="project" value="TreeGrafter"/>
</dbReference>
<dbReference type="GO" id="GO:0042802">
    <property type="term" value="F:identical protein binding"/>
    <property type="evidence" value="ECO:0007669"/>
    <property type="project" value="TreeGrafter"/>
</dbReference>
<dbReference type="GO" id="GO:0046872">
    <property type="term" value="F:metal ion binding"/>
    <property type="evidence" value="ECO:0007669"/>
    <property type="project" value="UniProtKB-KW"/>
</dbReference>
<dbReference type="GO" id="GO:0048029">
    <property type="term" value="F:monosaccharide binding"/>
    <property type="evidence" value="ECO:0007669"/>
    <property type="project" value="TreeGrafter"/>
</dbReference>
<dbReference type="GO" id="GO:0061621">
    <property type="term" value="P:canonical glycolysis"/>
    <property type="evidence" value="ECO:0007669"/>
    <property type="project" value="TreeGrafter"/>
</dbReference>
<dbReference type="GO" id="GO:0030388">
    <property type="term" value="P:fructose 1,6-bisphosphate metabolic process"/>
    <property type="evidence" value="ECO:0007669"/>
    <property type="project" value="TreeGrafter"/>
</dbReference>
<dbReference type="GO" id="GO:0006002">
    <property type="term" value="P:fructose 6-phosphate metabolic process"/>
    <property type="evidence" value="ECO:0007669"/>
    <property type="project" value="InterPro"/>
</dbReference>
<dbReference type="CDD" id="cd00763">
    <property type="entry name" value="Bacterial_PFK"/>
    <property type="match status" value="1"/>
</dbReference>
<dbReference type="FunFam" id="3.40.50.450:FF:000001">
    <property type="entry name" value="ATP-dependent 6-phosphofructokinase"/>
    <property type="match status" value="1"/>
</dbReference>
<dbReference type="FunFam" id="3.40.50.460:FF:000002">
    <property type="entry name" value="ATP-dependent 6-phosphofructokinase"/>
    <property type="match status" value="1"/>
</dbReference>
<dbReference type="Gene3D" id="3.40.50.450">
    <property type="match status" value="1"/>
</dbReference>
<dbReference type="Gene3D" id="3.40.50.460">
    <property type="entry name" value="Phosphofructokinase domain"/>
    <property type="match status" value="1"/>
</dbReference>
<dbReference type="HAMAP" id="MF_00339">
    <property type="entry name" value="Phosphofructokinase_I_B1"/>
    <property type="match status" value="1"/>
</dbReference>
<dbReference type="InterPro" id="IPR022953">
    <property type="entry name" value="ATP_PFK"/>
</dbReference>
<dbReference type="InterPro" id="IPR012003">
    <property type="entry name" value="ATP_PFK_prok-type"/>
</dbReference>
<dbReference type="InterPro" id="IPR012828">
    <property type="entry name" value="PFKA_ATP_prok"/>
</dbReference>
<dbReference type="InterPro" id="IPR015912">
    <property type="entry name" value="Phosphofructokinase_CS"/>
</dbReference>
<dbReference type="InterPro" id="IPR000023">
    <property type="entry name" value="Phosphofructokinase_dom"/>
</dbReference>
<dbReference type="InterPro" id="IPR035966">
    <property type="entry name" value="PKF_sf"/>
</dbReference>
<dbReference type="NCBIfam" id="TIGR02482">
    <property type="entry name" value="PFKA_ATP"/>
    <property type="match status" value="1"/>
</dbReference>
<dbReference type="NCBIfam" id="NF002872">
    <property type="entry name" value="PRK03202.1"/>
    <property type="match status" value="1"/>
</dbReference>
<dbReference type="PANTHER" id="PTHR13697:SF4">
    <property type="entry name" value="ATP-DEPENDENT 6-PHOSPHOFRUCTOKINASE"/>
    <property type="match status" value="1"/>
</dbReference>
<dbReference type="PANTHER" id="PTHR13697">
    <property type="entry name" value="PHOSPHOFRUCTOKINASE"/>
    <property type="match status" value="1"/>
</dbReference>
<dbReference type="Pfam" id="PF00365">
    <property type="entry name" value="PFK"/>
    <property type="match status" value="1"/>
</dbReference>
<dbReference type="PIRSF" id="PIRSF000532">
    <property type="entry name" value="ATP_PFK_prok"/>
    <property type="match status" value="1"/>
</dbReference>
<dbReference type="PRINTS" id="PR00476">
    <property type="entry name" value="PHFRCTKINASE"/>
</dbReference>
<dbReference type="SUPFAM" id="SSF53784">
    <property type="entry name" value="Phosphofructokinase"/>
    <property type="match status" value="1"/>
</dbReference>
<dbReference type="PROSITE" id="PS00433">
    <property type="entry name" value="PHOSPHOFRUCTOKINASE"/>
    <property type="match status" value="1"/>
</dbReference>
<comment type="function">
    <text evidence="1">Catalyzes the phosphorylation of D-fructose 6-phosphate to fructose 1,6-bisphosphate by ATP, the first committing step of glycolysis.</text>
</comment>
<comment type="catalytic activity">
    <reaction evidence="1">
        <text>beta-D-fructose 6-phosphate + ATP = beta-D-fructose 1,6-bisphosphate + ADP + H(+)</text>
        <dbReference type="Rhea" id="RHEA:16109"/>
        <dbReference type="ChEBI" id="CHEBI:15378"/>
        <dbReference type="ChEBI" id="CHEBI:30616"/>
        <dbReference type="ChEBI" id="CHEBI:32966"/>
        <dbReference type="ChEBI" id="CHEBI:57634"/>
        <dbReference type="ChEBI" id="CHEBI:456216"/>
        <dbReference type="EC" id="2.7.1.11"/>
    </reaction>
</comment>
<comment type="cofactor">
    <cofactor evidence="1">
        <name>Mg(2+)</name>
        <dbReference type="ChEBI" id="CHEBI:18420"/>
    </cofactor>
</comment>
<comment type="activity regulation">
    <text evidence="1">Allosterically activated by ADP and other diphosphonucleosides, and allosterically inhibited by phosphoenolpyruvate.</text>
</comment>
<comment type="pathway">
    <text evidence="1">Carbohydrate degradation; glycolysis; D-glyceraldehyde 3-phosphate and glycerone phosphate from D-glucose: step 3/4.</text>
</comment>
<comment type="subunit">
    <text evidence="1">Homotetramer.</text>
</comment>
<comment type="subcellular location">
    <subcellularLocation>
        <location evidence="1">Cytoplasm</location>
    </subcellularLocation>
</comment>
<comment type="similarity">
    <text evidence="1">Belongs to the phosphofructokinase type A (PFKA) family. ATP-dependent PFK group I subfamily. Prokaryotic clade 'B1' sub-subfamily.</text>
</comment>
<gene>
    <name evidence="1" type="primary">pfkA</name>
    <name type="ordered locus">ECIAI1_4121</name>
</gene>
<reference key="1">
    <citation type="journal article" date="2009" name="PLoS Genet.">
        <title>Organised genome dynamics in the Escherichia coli species results in highly diverse adaptive paths.</title>
        <authorList>
            <person name="Touchon M."/>
            <person name="Hoede C."/>
            <person name="Tenaillon O."/>
            <person name="Barbe V."/>
            <person name="Baeriswyl S."/>
            <person name="Bidet P."/>
            <person name="Bingen E."/>
            <person name="Bonacorsi S."/>
            <person name="Bouchier C."/>
            <person name="Bouvet O."/>
            <person name="Calteau A."/>
            <person name="Chiapello H."/>
            <person name="Clermont O."/>
            <person name="Cruveiller S."/>
            <person name="Danchin A."/>
            <person name="Diard M."/>
            <person name="Dossat C."/>
            <person name="Karoui M.E."/>
            <person name="Frapy E."/>
            <person name="Garry L."/>
            <person name="Ghigo J.M."/>
            <person name="Gilles A.M."/>
            <person name="Johnson J."/>
            <person name="Le Bouguenec C."/>
            <person name="Lescat M."/>
            <person name="Mangenot S."/>
            <person name="Martinez-Jehanne V."/>
            <person name="Matic I."/>
            <person name="Nassif X."/>
            <person name="Oztas S."/>
            <person name="Petit M.A."/>
            <person name="Pichon C."/>
            <person name="Rouy Z."/>
            <person name="Ruf C.S."/>
            <person name="Schneider D."/>
            <person name="Tourret J."/>
            <person name="Vacherie B."/>
            <person name="Vallenet D."/>
            <person name="Medigue C."/>
            <person name="Rocha E.P.C."/>
            <person name="Denamur E."/>
        </authorList>
    </citation>
    <scope>NUCLEOTIDE SEQUENCE [LARGE SCALE GENOMIC DNA]</scope>
    <source>
        <strain>IAI1</strain>
    </source>
</reference>
<feature type="chain" id="PRO_1000120039" description="ATP-dependent 6-phosphofructokinase isozyme 1">
    <location>
        <begin position="1"/>
        <end position="320"/>
    </location>
</feature>
<feature type="active site" description="Proton acceptor" evidence="1">
    <location>
        <position position="128"/>
    </location>
</feature>
<feature type="binding site" evidence="1">
    <location>
        <position position="12"/>
    </location>
    <ligand>
        <name>ATP</name>
        <dbReference type="ChEBI" id="CHEBI:30616"/>
    </ligand>
</feature>
<feature type="binding site" evidence="1">
    <location>
        <begin position="22"/>
        <end position="26"/>
    </location>
    <ligand>
        <name>ADP</name>
        <dbReference type="ChEBI" id="CHEBI:456216"/>
        <note>allosteric activator; ligand shared between dimeric partners</note>
    </ligand>
</feature>
<feature type="binding site" evidence="1">
    <location>
        <begin position="55"/>
        <end position="60"/>
    </location>
    <ligand>
        <name>ADP</name>
        <dbReference type="ChEBI" id="CHEBI:456216"/>
        <note>allosteric activator; ligand shared between dimeric partners</note>
    </ligand>
</feature>
<feature type="binding site" evidence="1">
    <location>
        <begin position="73"/>
        <end position="74"/>
    </location>
    <ligand>
        <name>ATP</name>
        <dbReference type="ChEBI" id="CHEBI:30616"/>
    </ligand>
</feature>
<feature type="binding site" evidence="1">
    <location>
        <begin position="103"/>
        <end position="106"/>
    </location>
    <ligand>
        <name>ATP</name>
        <dbReference type="ChEBI" id="CHEBI:30616"/>
    </ligand>
</feature>
<feature type="binding site" evidence="1">
    <location>
        <position position="104"/>
    </location>
    <ligand>
        <name>Mg(2+)</name>
        <dbReference type="ChEBI" id="CHEBI:18420"/>
        <note>catalytic</note>
    </ligand>
</feature>
<feature type="binding site" description="in other chain" evidence="1">
    <location>
        <begin position="126"/>
        <end position="128"/>
    </location>
    <ligand>
        <name>substrate</name>
        <note>ligand shared between dimeric partners</note>
    </ligand>
</feature>
<feature type="binding site" description="in other chain" evidence="1">
    <location>
        <position position="155"/>
    </location>
    <ligand>
        <name>ADP</name>
        <dbReference type="ChEBI" id="CHEBI:456216"/>
        <note>allosteric activator; ligand shared between dimeric partners</note>
    </ligand>
</feature>
<feature type="binding site" evidence="1">
    <location>
        <position position="163"/>
    </location>
    <ligand>
        <name>substrate</name>
        <note>ligand shared between dimeric partners</note>
    </ligand>
</feature>
<feature type="binding site" description="in other chain" evidence="1">
    <location>
        <begin position="170"/>
        <end position="172"/>
    </location>
    <ligand>
        <name>substrate</name>
        <note>ligand shared between dimeric partners</note>
    </ligand>
</feature>
<feature type="binding site" description="in other chain" evidence="1">
    <location>
        <begin position="186"/>
        <end position="188"/>
    </location>
    <ligand>
        <name>ADP</name>
        <dbReference type="ChEBI" id="CHEBI:456216"/>
        <note>allosteric activator; ligand shared between dimeric partners</note>
    </ligand>
</feature>
<feature type="binding site" description="in other chain" evidence="1">
    <location>
        <position position="212"/>
    </location>
    <ligand>
        <name>ADP</name>
        <dbReference type="ChEBI" id="CHEBI:456216"/>
        <note>allosteric activator; ligand shared between dimeric partners</note>
    </ligand>
</feature>
<feature type="binding site" description="in other chain" evidence="1">
    <location>
        <begin position="214"/>
        <end position="216"/>
    </location>
    <ligand>
        <name>ADP</name>
        <dbReference type="ChEBI" id="CHEBI:456216"/>
        <note>allosteric activator; ligand shared between dimeric partners</note>
    </ligand>
</feature>
<feature type="binding site" description="in other chain" evidence="1">
    <location>
        <position position="223"/>
    </location>
    <ligand>
        <name>substrate</name>
        <note>ligand shared between dimeric partners</note>
    </ligand>
</feature>
<feature type="binding site" evidence="1">
    <location>
        <position position="244"/>
    </location>
    <ligand>
        <name>substrate</name>
        <note>ligand shared between dimeric partners</note>
    </ligand>
</feature>
<feature type="binding site" description="in other chain" evidence="1">
    <location>
        <begin position="250"/>
        <end position="253"/>
    </location>
    <ligand>
        <name>substrate</name>
        <note>ligand shared between dimeric partners</note>
    </ligand>
</feature>